<gene>
    <name evidence="1" type="primary">thyA</name>
    <name type="ordered locus">CV_1027</name>
</gene>
<comment type="function">
    <text evidence="1">Catalyzes the reductive methylation of 2'-deoxyuridine-5'-monophosphate (dUMP) to 2'-deoxythymidine-5'-monophosphate (dTMP) while utilizing 5,10-methylenetetrahydrofolate (mTHF) as the methyl donor and reductant in the reaction, yielding dihydrofolate (DHF) as a by-product. This enzymatic reaction provides an intracellular de novo source of dTMP, an essential precursor for DNA biosynthesis.</text>
</comment>
<comment type="catalytic activity">
    <reaction evidence="1">
        <text>dUMP + (6R)-5,10-methylene-5,6,7,8-tetrahydrofolate = 7,8-dihydrofolate + dTMP</text>
        <dbReference type="Rhea" id="RHEA:12104"/>
        <dbReference type="ChEBI" id="CHEBI:15636"/>
        <dbReference type="ChEBI" id="CHEBI:57451"/>
        <dbReference type="ChEBI" id="CHEBI:63528"/>
        <dbReference type="ChEBI" id="CHEBI:246422"/>
        <dbReference type="EC" id="2.1.1.45"/>
    </reaction>
</comment>
<comment type="pathway">
    <text evidence="1">Pyrimidine metabolism; dTTP biosynthesis.</text>
</comment>
<comment type="subunit">
    <text evidence="1">Homodimer.</text>
</comment>
<comment type="subcellular location">
    <subcellularLocation>
        <location evidence="1">Cytoplasm</location>
    </subcellularLocation>
</comment>
<comment type="similarity">
    <text evidence="1">Belongs to the thymidylate synthase family. Bacterial-type ThyA subfamily.</text>
</comment>
<sequence length="264" mass="30154">MQQYLDLMRHVLEHGHDKADRTGTGTRSVFGYQMRFDLAAGFPLVTTKKCHLRSIIHELLWFLSGDTNIRYLKENGVSIWDEWADENGDLGPVYGYQWRSWPAPDGRHIDQISQLLDMIKKNPDSRRLIVSAWNPALVDQMALPPCHSLFQFYVANGRLSCQLYQRSADIFLGVPFNIASYALLTMMVAQVCGLQPGDFVHTLGDAHLYSNHLEQARLQLTRDPRPLPTMKLNPEVKDLFAFTFDDFALEGYDPHPHIKAQVAV</sequence>
<reference key="1">
    <citation type="journal article" date="2003" name="Proc. Natl. Acad. Sci. U.S.A.">
        <title>The complete genome sequence of Chromobacterium violaceum reveals remarkable and exploitable bacterial adaptability.</title>
        <authorList>
            <person name="Vasconcelos A.T.R."/>
            <person name="de Almeida D.F."/>
            <person name="Hungria M."/>
            <person name="Guimaraes C.T."/>
            <person name="Antonio R.V."/>
            <person name="Almeida F.C."/>
            <person name="de Almeida L.G.P."/>
            <person name="de Almeida R."/>
            <person name="Alves-Gomes J.A."/>
            <person name="Andrade E.M."/>
            <person name="Araripe J."/>
            <person name="de Araujo M.F.F."/>
            <person name="Astolfi-Filho S."/>
            <person name="Azevedo V."/>
            <person name="Baptista A.J."/>
            <person name="Bataus L.A.M."/>
            <person name="Batista J.S."/>
            <person name="Belo A."/>
            <person name="van den Berg C."/>
            <person name="Bogo M."/>
            <person name="Bonatto S."/>
            <person name="Bordignon J."/>
            <person name="Brigido M.M."/>
            <person name="Brito C.A."/>
            <person name="Brocchi M."/>
            <person name="Burity H.A."/>
            <person name="Camargo A.A."/>
            <person name="Cardoso D.D.P."/>
            <person name="Carneiro N.P."/>
            <person name="Carraro D.M."/>
            <person name="Carvalho C.M.B."/>
            <person name="Cascardo J.C.M."/>
            <person name="Cavada B.S."/>
            <person name="Chueire L.M.O."/>
            <person name="Creczynski-Pasa T.B."/>
            <person name="Cunha-Junior N.C."/>
            <person name="Fagundes N."/>
            <person name="Falcao C.L."/>
            <person name="Fantinatti F."/>
            <person name="Farias I.P."/>
            <person name="Felipe M.S.S."/>
            <person name="Ferrari L.P."/>
            <person name="Ferro J.A."/>
            <person name="Ferro M.I.T."/>
            <person name="Franco G.R."/>
            <person name="Freitas N.S.A."/>
            <person name="Furlan L.R."/>
            <person name="Gazzinelli R.T."/>
            <person name="Gomes E.A."/>
            <person name="Goncalves P.R."/>
            <person name="Grangeiro T.B."/>
            <person name="Grattapaglia D."/>
            <person name="Grisard E.C."/>
            <person name="Hanna E.S."/>
            <person name="Jardim S.N."/>
            <person name="Laurino J."/>
            <person name="Leoi L.C.T."/>
            <person name="Lima L.F.A."/>
            <person name="Loureiro M.F."/>
            <person name="Lyra M.C.C.P."/>
            <person name="Madeira H.M.F."/>
            <person name="Manfio G.P."/>
            <person name="Maranhao A.Q."/>
            <person name="Martins W.S."/>
            <person name="di Mauro S.M.Z."/>
            <person name="de Medeiros S.R.B."/>
            <person name="Meissner R.V."/>
            <person name="Moreira M.A.M."/>
            <person name="Nascimento F.F."/>
            <person name="Nicolas M.F."/>
            <person name="Oliveira J.G."/>
            <person name="Oliveira S.C."/>
            <person name="Paixao R.F.C."/>
            <person name="Parente J.A."/>
            <person name="Pedrosa F.O."/>
            <person name="Pena S.D.J."/>
            <person name="Pereira J.O."/>
            <person name="Pereira M."/>
            <person name="Pinto L.S.R.C."/>
            <person name="Pinto L.S."/>
            <person name="Porto J.I.R."/>
            <person name="Potrich D.P."/>
            <person name="Ramalho-Neto C.E."/>
            <person name="Reis A.M.M."/>
            <person name="Rigo L.U."/>
            <person name="Rondinelli E."/>
            <person name="Santos E.B.P."/>
            <person name="Santos F.R."/>
            <person name="Schneider M.P.C."/>
            <person name="Seuanez H.N."/>
            <person name="Silva A.M.R."/>
            <person name="da Silva A.L.C."/>
            <person name="Silva D.W."/>
            <person name="Silva R."/>
            <person name="Simoes I.C."/>
            <person name="Simon D."/>
            <person name="Soares C.M.A."/>
            <person name="Soares R.B.A."/>
            <person name="Souza E.M."/>
            <person name="Souza K.R.L."/>
            <person name="Souza R.C."/>
            <person name="Steffens M.B.R."/>
            <person name="Steindel M."/>
            <person name="Teixeira S.R."/>
            <person name="Urmenyi T."/>
            <person name="Vettore A."/>
            <person name="Wassem R."/>
            <person name="Zaha A."/>
            <person name="Simpson A.J.G."/>
        </authorList>
    </citation>
    <scope>NUCLEOTIDE SEQUENCE [LARGE SCALE GENOMIC DNA]</scope>
    <source>
        <strain>ATCC 12472 / DSM 30191 / JCM 1249 / CCUG 213 / NBRC 12614 / NCIMB 9131 / NCTC 9757 / MK</strain>
    </source>
</reference>
<dbReference type="EC" id="2.1.1.45" evidence="1"/>
<dbReference type="EMBL" id="AE016825">
    <property type="protein sequence ID" value="AAQ58702.1"/>
    <property type="molecule type" value="Genomic_DNA"/>
</dbReference>
<dbReference type="RefSeq" id="WP_011134582.1">
    <property type="nucleotide sequence ID" value="NC_005085.1"/>
</dbReference>
<dbReference type="SMR" id="Q7NZ95"/>
<dbReference type="STRING" id="243365.CV_1027"/>
<dbReference type="KEGG" id="cvi:CV_1027"/>
<dbReference type="eggNOG" id="COG0207">
    <property type="taxonomic scope" value="Bacteria"/>
</dbReference>
<dbReference type="HOGENOM" id="CLU_021669_0_0_4"/>
<dbReference type="OrthoDB" id="9774633at2"/>
<dbReference type="UniPathway" id="UPA00575"/>
<dbReference type="Proteomes" id="UP000001424">
    <property type="component" value="Chromosome"/>
</dbReference>
<dbReference type="GO" id="GO:0005829">
    <property type="term" value="C:cytosol"/>
    <property type="evidence" value="ECO:0007669"/>
    <property type="project" value="TreeGrafter"/>
</dbReference>
<dbReference type="GO" id="GO:0004799">
    <property type="term" value="F:thymidylate synthase activity"/>
    <property type="evidence" value="ECO:0007669"/>
    <property type="project" value="UniProtKB-UniRule"/>
</dbReference>
<dbReference type="GO" id="GO:0006231">
    <property type="term" value="P:dTMP biosynthetic process"/>
    <property type="evidence" value="ECO:0007669"/>
    <property type="project" value="UniProtKB-UniRule"/>
</dbReference>
<dbReference type="GO" id="GO:0006235">
    <property type="term" value="P:dTTP biosynthetic process"/>
    <property type="evidence" value="ECO:0007669"/>
    <property type="project" value="UniProtKB-UniRule"/>
</dbReference>
<dbReference type="GO" id="GO:0032259">
    <property type="term" value="P:methylation"/>
    <property type="evidence" value="ECO:0007669"/>
    <property type="project" value="UniProtKB-KW"/>
</dbReference>
<dbReference type="CDD" id="cd00351">
    <property type="entry name" value="TS_Pyrimidine_HMase"/>
    <property type="match status" value="1"/>
</dbReference>
<dbReference type="FunFam" id="3.30.572.10:FF:000001">
    <property type="entry name" value="Thymidylate synthase"/>
    <property type="match status" value="1"/>
</dbReference>
<dbReference type="Gene3D" id="3.30.572.10">
    <property type="entry name" value="Thymidylate synthase/dCMP hydroxymethylase domain"/>
    <property type="match status" value="1"/>
</dbReference>
<dbReference type="HAMAP" id="MF_00008">
    <property type="entry name" value="Thymidy_synth_bact"/>
    <property type="match status" value="1"/>
</dbReference>
<dbReference type="InterPro" id="IPR045097">
    <property type="entry name" value="Thymidate_synth/dCMP_Mease"/>
</dbReference>
<dbReference type="InterPro" id="IPR023451">
    <property type="entry name" value="Thymidate_synth/dCMP_Mease_dom"/>
</dbReference>
<dbReference type="InterPro" id="IPR036926">
    <property type="entry name" value="Thymidate_synth/dCMP_Mease_sf"/>
</dbReference>
<dbReference type="InterPro" id="IPR000398">
    <property type="entry name" value="Thymidylate_synthase"/>
</dbReference>
<dbReference type="InterPro" id="IPR020940">
    <property type="entry name" value="Thymidylate_synthase_AS"/>
</dbReference>
<dbReference type="NCBIfam" id="NF002497">
    <property type="entry name" value="PRK01827.1-3"/>
    <property type="match status" value="1"/>
</dbReference>
<dbReference type="NCBIfam" id="NF002499">
    <property type="entry name" value="PRK01827.1-5"/>
    <property type="match status" value="1"/>
</dbReference>
<dbReference type="NCBIfam" id="TIGR03284">
    <property type="entry name" value="thym_sym"/>
    <property type="match status" value="2"/>
</dbReference>
<dbReference type="PANTHER" id="PTHR11548:SF9">
    <property type="entry name" value="THYMIDYLATE SYNTHASE"/>
    <property type="match status" value="1"/>
</dbReference>
<dbReference type="PANTHER" id="PTHR11548">
    <property type="entry name" value="THYMIDYLATE SYNTHASE 1"/>
    <property type="match status" value="1"/>
</dbReference>
<dbReference type="Pfam" id="PF00303">
    <property type="entry name" value="Thymidylat_synt"/>
    <property type="match status" value="1"/>
</dbReference>
<dbReference type="PRINTS" id="PR00108">
    <property type="entry name" value="THYMDSNTHASE"/>
</dbReference>
<dbReference type="SUPFAM" id="SSF55831">
    <property type="entry name" value="Thymidylate synthase/dCMP hydroxymethylase"/>
    <property type="match status" value="1"/>
</dbReference>
<dbReference type="PROSITE" id="PS00091">
    <property type="entry name" value="THYMIDYLATE_SYNTHASE"/>
    <property type="match status" value="1"/>
</dbReference>
<feature type="chain" id="PRO_0000140948" description="Thymidylate synthase">
    <location>
        <begin position="1"/>
        <end position="264"/>
    </location>
</feature>
<feature type="active site" description="Nucleophile" evidence="1">
    <location>
        <position position="146"/>
    </location>
</feature>
<feature type="binding site" description="in other chain" evidence="1">
    <location>
        <position position="21"/>
    </location>
    <ligand>
        <name>dUMP</name>
        <dbReference type="ChEBI" id="CHEBI:246422"/>
        <note>ligand shared between dimeric partners</note>
    </ligand>
</feature>
<feature type="binding site" evidence="1">
    <location>
        <position position="51"/>
    </location>
    <ligand>
        <name>(6R)-5,10-methylene-5,6,7,8-tetrahydrofolate</name>
        <dbReference type="ChEBI" id="CHEBI:15636"/>
    </ligand>
</feature>
<feature type="binding site" evidence="1">
    <location>
        <begin position="126"/>
        <end position="127"/>
    </location>
    <ligand>
        <name>dUMP</name>
        <dbReference type="ChEBI" id="CHEBI:246422"/>
        <note>ligand shared between dimeric partners</note>
    </ligand>
</feature>
<feature type="binding site" description="in other chain" evidence="1">
    <location>
        <begin position="166"/>
        <end position="169"/>
    </location>
    <ligand>
        <name>dUMP</name>
        <dbReference type="ChEBI" id="CHEBI:246422"/>
        <note>ligand shared between dimeric partners</note>
    </ligand>
</feature>
<feature type="binding site" evidence="1">
    <location>
        <position position="169"/>
    </location>
    <ligand>
        <name>(6R)-5,10-methylene-5,6,7,8-tetrahydrofolate</name>
        <dbReference type="ChEBI" id="CHEBI:15636"/>
    </ligand>
</feature>
<feature type="binding site" description="in other chain" evidence="1">
    <location>
        <position position="177"/>
    </location>
    <ligand>
        <name>dUMP</name>
        <dbReference type="ChEBI" id="CHEBI:246422"/>
        <note>ligand shared between dimeric partners</note>
    </ligand>
</feature>
<feature type="binding site" description="in other chain" evidence="1">
    <location>
        <begin position="207"/>
        <end position="209"/>
    </location>
    <ligand>
        <name>dUMP</name>
        <dbReference type="ChEBI" id="CHEBI:246422"/>
        <note>ligand shared between dimeric partners</note>
    </ligand>
</feature>
<feature type="binding site" evidence="1">
    <location>
        <position position="263"/>
    </location>
    <ligand>
        <name>(6R)-5,10-methylene-5,6,7,8-tetrahydrofolate</name>
        <dbReference type="ChEBI" id="CHEBI:15636"/>
    </ligand>
</feature>
<evidence type="ECO:0000255" key="1">
    <source>
        <dbReference type="HAMAP-Rule" id="MF_00008"/>
    </source>
</evidence>
<accession>Q7NZ95</accession>
<keyword id="KW-0963">Cytoplasm</keyword>
<keyword id="KW-0489">Methyltransferase</keyword>
<keyword id="KW-0545">Nucleotide biosynthesis</keyword>
<keyword id="KW-1185">Reference proteome</keyword>
<keyword id="KW-0808">Transferase</keyword>
<proteinExistence type="inferred from homology"/>
<organism>
    <name type="scientific">Chromobacterium violaceum (strain ATCC 12472 / DSM 30191 / JCM 1249 / CCUG 213 / NBRC 12614 / NCIMB 9131 / NCTC 9757 / MK)</name>
    <dbReference type="NCBI Taxonomy" id="243365"/>
    <lineage>
        <taxon>Bacteria</taxon>
        <taxon>Pseudomonadati</taxon>
        <taxon>Pseudomonadota</taxon>
        <taxon>Betaproteobacteria</taxon>
        <taxon>Neisseriales</taxon>
        <taxon>Chromobacteriaceae</taxon>
        <taxon>Chromobacterium</taxon>
    </lineage>
</organism>
<name>TYSY_CHRVO</name>
<protein>
    <recommendedName>
        <fullName evidence="1">Thymidylate synthase</fullName>
        <shortName evidence="1">TS</shortName>
        <shortName evidence="1">TSase</shortName>
        <ecNumber evidence="1">2.1.1.45</ecNumber>
    </recommendedName>
</protein>